<accession>Q8RGH8</accession>
<keyword id="KW-0028">Amino-acid biosynthesis</keyword>
<keyword id="KW-0057">Aromatic amino acid biosynthesis</keyword>
<keyword id="KW-0456">Lyase</keyword>
<keyword id="KW-0663">Pyridoxal phosphate</keyword>
<keyword id="KW-1185">Reference proteome</keyword>
<keyword id="KW-0822">Tryptophan biosynthesis</keyword>
<comment type="function">
    <text evidence="1">The beta subunit is responsible for the synthesis of L-tryptophan from indole and L-serine.</text>
</comment>
<comment type="catalytic activity">
    <reaction evidence="1">
        <text>(1S,2R)-1-C-(indol-3-yl)glycerol 3-phosphate + L-serine = D-glyceraldehyde 3-phosphate + L-tryptophan + H2O</text>
        <dbReference type="Rhea" id="RHEA:10532"/>
        <dbReference type="ChEBI" id="CHEBI:15377"/>
        <dbReference type="ChEBI" id="CHEBI:33384"/>
        <dbReference type="ChEBI" id="CHEBI:57912"/>
        <dbReference type="ChEBI" id="CHEBI:58866"/>
        <dbReference type="ChEBI" id="CHEBI:59776"/>
        <dbReference type="EC" id="4.2.1.20"/>
    </reaction>
</comment>
<comment type="cofactor">
    <cofactor evidence="1">
        <name>pyridoxal 5'-phosphate</name>
        <dbReference type="ChEBI" id="CHEBI:597326"/>
    </cofactor>
</comment>
<comment type="pathway">
    <text evidence="1">Amino-acid biosynthesis; L-tryptophan biosynthesis; L-tryptophan from chorismate: step 5/5.</text>
</comment>
<comment type="subunit">
    <text evidence="1">Tetramer of two alpha and two beta chains.</text>
</comment>
<comment type="similarity">
    <text evidence="1">Belongs to the TrpB family.</text>
</comment>
<proteinExistence type="inferred from homology"/>
<feature type="chain" id="PRO_0000098951" description="Tryptophan synthase beta chain">
    <location>
        <begin position="1"/>
        <end position="395"/>
    </location>
</feature>
<feature type="modified residue" description="N6-(pyridoxal phosphate)lysine" evidence="1">
    <location>
        <position position="89"/>
    </location>
</feature>
<name>TRPB_FUSNN</name>
<gene>
    <name evidence="1" type="primary">trpB</name>
    <name type="ordered locus">FN0317</name>
</gene>
<reference key="1">
    <citation type="journal article" date="2002" name="J. Bacteriol.">
        <title>Genome sequence and analysis of the oral bacterium Fusobacterium nucleatum strain ATCC 25586.</title>
        <authorList>
            <person name="Kapatral V."/>
            <person name="Anderson I."/>
            <person name="Ivanova N."/>
            <person name="Reznik G."/>
            <person name="Los T."/>
            <person name="Lykidis A."/>
            <person name="Bhattacharyya A."/>
            <person name="Bartman A."/>
            <person name="Gardner W."/>
            <person name="Grechkin G."/>
            <person name="Zhu L."/>
            <person name="Vasieva O."/>
            <person name="Chu L."/>
            <person name="Kogan Y."/>
            <person name="Chaga O."/>
            <person name="Goltsman E."/>
            <person name="Bernal A."/>
            <person name="Larsen N."/>
            <person name="D'Souza M."/>
            <person name="Walunas T."/>
            <person name="Pusch G."/>
            <person name="Haselkorn R."/>
            <person name="Fonstein M."/>
            <person name="Kyrpides N.C."/>
            <person name="Overbeek R."/>
        </authorList>
    </citation>
    <scope>NUCLEOTIDE SEQUENCE [LARGE SCALE GENOMIC DNA]</scope>
    <source>
        <strain>ATCC 25586 / DSM 15643 / BCRC 10681 / CIP 101130 / JCM 8532 / KCTC 2640 / LMG 13131 / VPI 4355</strain>
    </source>
</reference>
<sequence length="395" mass="43412">MTTENKKGYFGEFGGSYVPEVVQKALDKLEEAYNKYKDDEEFLKEYHHYLKNYSGRETPLYFAESLTNYLGGAKIYLKREDLNHLGAHKLNNVIGQILLAKRMGKKKVIAETGAGQHGVATAAAAAKFGMQCDIYMGALDVERQRLNVFRMEILGATVHAVEKGERTLKEAVDAAFKAWINNINDTFYVLGSAVGPHPYPSMVKDFQRVISQEARRQILEKENRLPDMIIACVGGGSNAIGAFAEFIPDKEVKLIGVEAAGKGLNTDRHAATLTLGTVDVLDGMKTYALFNEDGSVKPVYSISPGLDYPGIGPEHAFLRDSKRAEYVSATDDEAVNALLLLTKKEGIIPAIESSHALAEVIKRAPKLNKNKIIIVNISGRGDKDVAAIAEYLKNK</sequence>
<organism>
    <name type="scientific">Fusobacterium nucleatum subsp. nucleatum (strain ATCC 25586 / DSM 15643 / BCRC 10681 / CIP 101130 / JCM 8532 / KCTC 2640 / LMG 13131 / VPI 4355)</name>
    <dbReference type="NCBI Taxonomy" id="190304"/>
    <lineage>
        <taxon>Bacteria</taxon>
        <taxon>Fusobacteriati</taxon>
        <taxon>Fusobacteriota</taxon>
        <taxon>Fusobacteriia</taxon>
        <taxon>Fusobacteriales</taxon>
        <taxon>Fusobacteriaceae</taxon>
        <taxon>Fusobacterium</taxon>
    </lineage>
</organism>
<evidence type="ECO:0000255" key="1">
    <source>
        <dbReference type="HAMAP-Rule" id="MF_00133"/>
    </source>
</evidence>
<dbReference type="EC" id="4.2.1.20" evidence="1"/>
<dbReference type="EMBL" id="AE009951">
    <property type="protein sequence ID" value="AAL94523.1"/>
    <property type="molecule type" value="Genomic_DNA"/>
</dbReference>
<dbReference type="RefSeq" id="NP_603224.1">
    <property type="nucleotide sequence ID" value="NC_003454.1"/>
</dbReference>
<dbReference type="RefSeq" id="WP_011016308.1">
    <property type="nucleotide sequence ID" value="NZ_CP028101.1"/>
</dbReference>
<dbReference type="SMR" id="Q8RGH8"/>
<dbReference type="FunCoup" id="Q8RGH8">
    <property type="interactions" value="342"/>
</dbReference>
<dbReference type="STRING" id="190304.FN0317"/>
<dbReference type="PaxDb" id="190304-FN0317"/>
<dbReference type="EnsemblBacteria" id="AAL94523">
    <property type="protein sequence ID" value="AAL94523"/>
    <property type="gene ID" value="FN0317"/>
</dbReference>
<dbReference type="GeneID" id="79783326"/>
<dbReference type="KEGG" id="fnu:FN0317"/>
<dbReference type="PATRIC" id="fig|190304.8.peg.897"/>
<dbReference type="eggNOG" id="COG0133">
    <property type="taxonomic scope" value="Bacteria"/>
</dbReference>
<dbReference type="HOGENOM" id="CLU_016734_3_1_0"/>
<dbReference type="InParanoid" id="Q8RGH8"/>
<dbReference type="BioCyc" id="FNUC190304:G1FZS-914-MONOMER"/>
<dbReference type="UniPathway" id="UPA00035">
    <property type="reaction ID" value="UER00044"/>
</dbReference>
<dbReference type="Proteomes" id="UP000002521">
    <property type="component" value="Chromosome"/>
</dbReference>
<dbReference type="GO" id="GO:0005737">
    <property type="term" value="C:cytoplasm"/>
    <property type="evidence" value="ECO:0000318"/>
    <property type="project" value="GO_Central"/>
</dbReference>
<dbReference type="GO" id="GO:0004834">
    <property type="term" value="F:tryptophan synthase activity"/>
    <property type="evidence" value="ECO:0007669"/>
    <property type="project" value="UniProtKB-UniRule"/>
</dbReference>
<dbReference type="GO" id="GO:0000162">
    <property type="term" value="P:L-tryptophan biosynthetic process"/>
    <property type="evidence" value="ECO:0000318"/>
    <property type="project" value="GO_Central"/>
</dbReference>
<dbReference type="CDD" id="cd06446">
    <property type="entry name" value="Trp-synth_B"/>
    <property type="match status" value="1"/>
</dbReference>
<dbReference type="FunFam" id="3.40.50.1100:FF:000001">
    <property type="entry name" value="Tryptophan synthase beta chain"/>
    <property type="match status" value="1"/>
</dbReference>
<dbReference type="FunFam" id="3.40.50.1100:FF:000004">
    <property type="entry name" value="Tryptophan synthase beta chain"/>
    <property type="match status" value="1"/>
</dbReference>
<dbReference type="Gene3D" id="3.40.50.1100">
    <property type="match status" value="2"/>
</dbReference>
<dbReference type="HAMAP" id="MF_00133">
    <property type="entry name" value="Trp_synth_beta"/>
    <property type="match status" value="1"/>
</dbReference>
<dbReference type="InterPro" id="IPR006653">
    <property type="entry name" value="Trp_synth_b_CS"/>
</dbReference>
<dbReference type="InterPro" id="IPR006654">
    <property type="entry name" value="Trp_synth_beta"/>
</dbReference>
<dbReference type="InterPro" id="IPR023026">
    <property type="entry name" value="Trp_synth_beta/beta-like"/>
</dbReference>
<dbReference type="InterPro" id="IPR001926">
    <property type="entry name" value="TrpB-like_PALP"/>
</dbReference>
<dbReference type="InterPro" id="IPR036052">
    <property type="entry name" value="TrpB-like_PALP_sf"/>
</dbReference>
<dbReference type="NCBIfam" id="TIGR00263">
    <property type="entry name" value="trpB"/>
    <property type="match status" value="1"/>
</dbReference>
<dbReference type="PANTHER" id="PTHR48077:SF3">
    <property type="entry name" value="TRYPTOPHAN SYNTHASE"/>
    <property type="match status" value="1"/>
</dbReference>
<dbReference type="PANTHER" id="PTHR48077">
    <property type="entry name" value="TRYPTOPHAN SYNTHASE-RELATED"/>
    <property type="match status" value="1"/>
</dbReference>
<dbReference type="Pfam" id="PF00291">
    <property type="entry name" value="PALP"/>
    <property type="match status" value="1"/>
</dbReference>
<dbReference type="PIRSF" id="PIRSF001413">
    <property type="entry name" value="Trp_syn_beta"/>
    <property type="match status" value="1"/>
</dbReference>
<dbReference type="SUPFAM" id="SSF53686">
    <property type="entry name" value="Tryptophan synthase beta subunit-like PLP-dependent enzymes"/>
    <property type="match status" value="1"/>
</dbReference>
<dbReference type="PROSITE" id="PS00168">
    <property type="entry name" value="TRP_SYNTHASE_BETA"/>
    <property type="match status" value="1"/>
</dbReference>
<protein>
    <recommendedName>
        <fullName evidence="1">Tryptophan synthase beta chain</fullName>
        <ecNumber evidence="1">4.2.1.20</ecNumber>
    </recommendedName>
</protein>